<proteinExistence type="evidence at protein level"/>
<dbReference type="EC" id="3.2.1.26" evidence="8"/>
<dbReference type="EMBL" id="JN592032">
    <property type="protein sequence ID" value="AEY79729.1"/>
    <property type="molecule type" value="mRNA"/>
</dbReference>
<dbReference type="SMR" id="H2DF87"/>
<dbReference type="GO" id="GO:0016020">
    <property type="term" value="C:membrane"/>
    <property type="evidence" value="ECO:0007669"/>
    <property type="project" value="UniProtKB-SubCell"/>
</dbReference>
<dbReference type="GO" id="GO:0005775">
    <property type="term" value="C:vacuolar lumen"/>
    <property type="evidence" value="ECO:0007669"/>
    <property type="project" value="UniProtKB-SubCell"/>
</dbReference>
<dbReference type="GO" id="GO:0004564">
    <property type="term" value="F:beta-fructofuranosidase activity"/>
    <property type="evidence" value="ECO:0007669"/>
    <property type="project" value="UniProtKB-EC"/>
</dbReference>
<dbReference type="GO" id="GO:0005975">
    <property type="term" value="P:carbohydrate metabolic process"/>
    <property type="evidence" value="ECO:0007669"/>
    <property type="project" value="InterPro"/>
</dbReference>
<dbReference type="CDD" id="cd18624">
    <property type="entry name" value="GH32_Fruct1-like"/>
    <property type="match status" value="1"/>
</dbReference>
<dbReference type="FunFam" id="2.115.10.20:FF:000001">
    <property type="entry name" value="Beta-fructofuranosidase, insoluble isoenzyme CWINV1"/>
    <property type="match status" value="1"/>
</dbReference>
<dbReference type="Gene3D" id="2.60.120.560">
    <property type="entry name" value="Exo-inulinase, domain 1"/>
    <property type="match status" value="1"/>
</dbReference>
<dbReference type="Gene3D" id="2.115.10.20">
    <property type="entry name" value="Glycosyl hydrolase domain, family 43"/>
    <property type="match status" value="1"/>
</dbReference>
<dbReference type="InterPro" id="IPR021792">
    <property type="entry name" value="Beta-fructofuranosidase_N"/>
</dbReference>
<dbReference type="InterPro" id="IPR013320">
    <property type="entry name" value="ConA-like_dom_sf"/>
</dbReference>
<dbReference type="InterPro" id="IPR050551">
    <property type="entry name" value="Fructan_Metab_Enzymes"/>
</dbReference>
<dbReference type="InterPro" id="IPR001362">
    <property type="entry name" value="Glyco_hydro_32"/>
</dbReference>
<dbReference type="InterPro" id="IPR018053">
    <property type="entry name" value="Glyco_hydro_32_AS"/>
</dbReference>
<dbReference type="InterPro" id="IPR013148">
    <property type="entry name" value="Glyco_hydro_32_N"/>
</dbReference>
<dbReference type="InterPro" id="IPR023296">
    <property type="entry name" value="Glyco_hydro_beta-prop_sf"/>
</dbReference>
<dbReference type="PANTHER" id="PTHR31953">
    <property type="entry name" value="BETA-FRUCTOFURANOSIDASE, INSOLUBLE ISOENZYME CWINV1-RELATED"/>
    <property type="match status" value="1"/>
</dbReference>
<dbReference type="Pfam" id="PF00251">
    <property type="entry name" value="Glyco_hydro_32N"/>
    <property type="match status" value="1"/>
</dbReference>
<dbReference type="Pfam" id="PF11837">
    <property type="entry name" value="INV_N"/>
    <property type="match status" value="1"/>
</dbReference>
<dbReference type="SMART" id="SM00640">
    <property type="entry name" value="Glyco_32"/>
    <property type="match status" value="1"/>
</dbReference>
<dbReference type="SUPFAM" id="SSF75005">
    <property type="entry name" value="Arabinanase/levansucrase/invertase"/>
    <property type="match status" value="1"/>
</dbReference>
<dbReference type="SUPFAM" id="SSF49899">
    <property type="entry name" value="Concanavalin A-like lectins/glucanases"/>
    <property type="match status" value="1"/>
</dbReference>
<dbReference type="PROSITE" id="PS00609">
    <property type="entry name" value="GLYCOSYL_HYDROL_F32"/>
    <property type="match status" value="1"/>
</dbReference>
<feature type="propeptide" id="PRO_0000438790" description="Removed in mature form" evidence="13">
    <location>
        <begin position="1"/>
        <end position="115"/>
    </location>
</feature>
<feature type="chain" id="PRO_0000438791" description="Acid beta-fructofuranosidase 1, vacuolar">
    <location>
        <begin position="116"/>
        <end position="588"/>
    </location>
</feature>
<feature type="topological domain" description="Cytoplasmic" evidence="12">
    <location>
        <begin position="1"/>
        <end position="31"/>
    </location>
</feature>
<feature type="transmembrane region" description="Helical; Signal-anchor for type II membrane protein" evidence="4">
    <location>
        <begin position="32"/>
        <end position="52"/>
    </location>
</feature>
<feature type="topological domain" description="Lumenal" evidence="12">
    <location>
        <begin position="53"/>
        <end position="588"/>
    </location>
</feature>
<feature type="region of interest" description="Disordered" evidence="6">
    <location>
        <begin position="57"/>
        <end position="86"/>
    </location>
</feature>
<feature type="compositionally biased region" description="Basic and acidic residues" evidence="6">
    <location>
        <begin position="62"/>
        <end position="71"/>
    </location>
</feature>
<feature type="compositionally biased region" description="Polar residues" evidence="6">
    <location>
        <begin position="73"/>
        <end position="84"/>
    </location>
</feature>
<feature type="active site" evidence="5">
    <location>
        <position position="133"/>
    </location>
</feature>
<feature type="binding site" evidence="3">
    <location>
        <begin position="130"/>
        <end position="133"/>
    </location>
    <ligand>
        <name>substrate</name>
    </ligand>
</feature>
<feature type="binding site" evidence="3">
    <location>
        <position position="149"/>
    </location>
    <ligand>
        <name>substrate</name>
    </ligand>
</feature>
<feature type="binding site" evidence="3">
    <location>
        <position position="157"/>
    </location>
    <ligand>
        <name>substrate</name>
    </ligand>
</feature>
<feature type="binding site" evidence="3">
    <location>
        <begin position="192"/>
        <end position="193"/>
    </location>
    <ligand>
        <name>substrate</name>
    </ligand>
</feature>
<feature type="binding site" evidence="3">
    <location>
        <begin position="256"/>
        <end position="257"/>
    </location>
    <ligand>
        <name>substrate</name>
    </ligand>
</feature>
<feature type="binding site" evidence="3">
    <location>
        <position position="311"/>
    </location>
    <ligand>
        <name>substrate</name>
    </ligand>
</feature>
<feature type="binding site" evidence="3">
    <location>
        <position position="344"/>
    </location>
    <ligand>
        <name>substrate</name>
    </ligand>
</feature>
<feature type="glycosylation site" description="N-linked (GlcNAc...) asparagine" evidence="4">
    <location>
        <position position="159"/>
    </location>
</feature>
<feature type="glycosylation site" description="N-linked (GlcNAc...) asparagine" evidence="4">
    <location>
        <position position="226"/>
    </location>
</feature>
<feature type="disulfide bond" evidence="3">
    <location>
        <begin position="499"/>
        <end position="545"/>
    </location>
</feature>
<accession>H2DF87</accession>
<comment type="function">
    <text evidence="8 10">Acidic vacuolar invertase involved in light-induced bud burst (PubMed:22505690, PubMed:27083698).</text>
</comment>
<comment type="catalytic activity">
    <reaction evidence="8">
        <text>Hydrolysis of terminal non-reducing beta-D-fructofuranoside residues in beta-D-fructofuranosides.</text>
        <dbReference type="EC" id="3.2.1.26"/>
    </reaction>
</comment>
<comment type="biophysicochemical properties">
    <phDependence>
        <text evidence="10">Optimum pH is 4.5.</text>
    </phDependence>
</comment>
<comment type="subunit">
    <text evidence="1 10">Monomer (PubMed:27083698). May be present in two forms, a 70 kDa monomer and a heterodimer of the 30 kDa and 38 kDa subunits (By similarity). The ratio of the levels of the two forms within cells appears to be regulated developmentally (By similarity).</text>
</comment>
<comment type="subcellular location">
    <subcellularLocation>
        <location evidence="10">Membrane</location>
        <topology evidence="4">Single-pass type II membrane protein</topology>
    </subcellularLocation>
    <subcellularLocation>
        <location evidence="2">Vacuole lumen</location>
    </subcellularLocation>
    <text evidence="2">May be released into the lumen of the vacuole from the tonoplast through a proteolytic processing.</text>
</comment>
<comment type="tissue specificity">
    <text evidence="8 9">Expressed in buds, stems, roots and leaves (PubMed:22505690). Expressed in the epidermal cells of young leaves and of primordial leaves (PubMed:25108242).</text>
</comment>
<comment type="induction">
    <text evidence="7 8 9">Strongly up-regulated synergistically by light and sugars during bud burst (PubMed:20374536, PubMed:22505690, PubMed:25108242). Up-regulated synergistically by the combination of light and gibberellin (PubMed:25108242).</text>
</comment>
<comment type="PTM">
    <text evidence="10">Glycosylated.</text>
</comment>
<comment type="similarity">
    <text evidence="12">Belongs to the glycosyl hydrolase 32 family.</text>
</comment>
<comment type="online information" name="Protein Spotlight">
    <link uri="https://www.proteinspotlight.org/back_issues/224"/>
    <text>On light, buds and bursts - Issue 224 of April 2020</text>
</comment>
<evidence type="ECO:0000250" key="1">
    <source>
        <dbReference type="UniProtKB" id="P29001"/>
    </source>
</evidence>
<evidence type="ECO:0000250" key="2">
    <source>
        <dbReference type="UniProtKB" id="Q39041"/>
    </source>
</evidence>
<evidence type="ECO:0000250" key="3">
    <source>
        <dbReference type="UniProtKB" id="Q43866"/>
    </source>
</evidence>
<evidence type="ECO:0000255" key="4"/>
<evidence type="ECO:0000255" key="5">
    <source>
        <dbReference type="PROSITE-ProRule" id="PRU10067"/>
    </source>
</evidence>
<evidence type="ECO:0000256" key="6">
    <source>
        <dbReference type="SAM" id="MobiDB-lite"/>
    </source>
</evidence>
<evidence type="ECO:0000269" key="7">
    <source>
    </source>
</evidence>
<evidence type="ECO:0000269" key="8">
    <source>
    </source>
</evidence>
<evidence type="ECO:0000269" key="9">
    <source>
    </source>
</evidence>
<evidence type="ECO:0000269" key="10">
    <source>
    </source>
</evidence>
<evidence type="ECO:0000303" key="11">
    <source>
    </source>
</evidence>
<evidence type="ECO:0000305" key="12"/>
<evidence type="ECO:0000305" key="13">
    <source>
    </source>
</evidence>
<evidence type="ECO:0000312" key="14">
    <source>
        <dbReference type="EMBL" id="AEY79729.1"/>
    </source>
</evidence>
<sequence length="588" mass="65375">MDTSTSAYAPLPGEDPLFSGHPPASLRRSWKGFAVIFASVLFLLSLVGLIIHQGPQQPPDVMPDKQDEHHHPQSTTPASETTASWEPRGKALGVSAKSNPPVSDELSYNWTNAMFSWQRTAFHFQPERNWMNDPNGPLFYKGWYHLFYQYNPDSAIWGNITWGHAVSTDLIHWLYLPIAMVADQWYDANGVWSGSATLLPDGQIVMLYTGDTVDAVQVVCLAHPANLSDPLLLDWVKYSGNPVLTPPPGILTTDFRDPTTAWTGPDGKWRITIGSKVNTTGISFVYHTEDFKTYNMSKGVLHAVPGTGMWECIDFYPVAINGSKGVETSVNNPSVKHVLKASLDNTKVDHYALGTYFEENETWVPDNPGLDVGIGLRYDYGRYYASKTFYDQNKERRILRGWINETDTESDDLAKGWASVQTIPRTVLFDNKTGTNLIQWPVEEIEELRLNNTDFSDVLVEAGTVVELDIGTATQLDILVEFELEPLESSETVNSSVGCGGGAVDRGTFGPFGILVIADETLTELTPIYFNLANSTEGDVITYFCADERRSSKAPDVFKQVYGSEVPVLDGEKHFARVLRALRKEVGR</sequence>
<name>RHVI1_ROSHC</name>
<protein>
    <recommendedName>
        <fullName evidence="12">Acid beta-fructofuranosidase 1, vacuolar</fullName>
        <ecNumber evidence="8">3.2.1.26</ecNumber>
    </recommendedName>
    <alternativeName>
        <fullName evidence="11">Vacuolar invertase 1</fullName>
        <shortName evidence="11">RvVI1</shortName>
    </alternativeName>
</protein>
<keyword id="KW-1015">Disulfide bond</keyword>
<keyword id="KW-0325">Glycoprotein</keyword>
<keyword id="KW-0326">Glycosidase</keyword>
<keyword id="KW-0378">Hydrolase</keyword>
<keyword id="KW-0472">Membrane</keyword>
<keyword id="KW-0735">Signal-anchor</keyword>
<keyword id="KW-0812">Transmembrane</keyword>
<keyword id="KW-1133">Transmembrane helix</keyword>
<keyword id="KW-0926">Vacuole</keyword>
<keyword id="KW-0865">Zymogen</keyword>
<organism evidence="14">
    <name type="scientific">Rosa hybrid cultivar</name>
    <dbReference type="NCBI Taxonomy" id="128735"/>
    <lineage>
        <taxon>Eukaryota</taxon>
        <taxon>Viridiplantae</taxon>
        <taxon>Streptophyta</taxon>
        <taxon>Embryophyta</taxon>
        <taxon>Tracheophyta</taxon>
        <taxon>Spermatophyta</taxon>
        <taxon>Magnoliopsida</taxon>
        <taxon>eudicotyledons</taxon>
        <taxon>Gunneridae</taxon>
        <taxon>Pentapetalae</taxon>
        <taxon>rosids</taxon>
        <taxon>fabids</taxon>
        <taxon>Rosales</taxon>
        <taxon>Rosaceae</taxon>
        <taxon>Rosoideae</taxon>
        <taxon>Rosoideae incertae sedis</taxon>
        <taxon>Rosa</taxon>
    </lineage>
</organism>
<reference key="1">
    <citation type="journal article" date="2012" name="Plant Cell Physiol.">
        <title>Insight into the role of sugars in bud burst under light in the rose.</title>
        <authorList>
            <person name="Rabot A."/>
            <person name="Henry C."/>
            <person name="Ben Baaziz K."/>
            <person name="Mortreau E."/>
            <person name="Azri W."/>
            <person name="Lothier J."/>
            <person name="Hamama L."/>
            <person name="Boummaza R."/>
            <person name="Leduc N."/>
            <person name="Pelleschi-Travier S."/>
            <person name="Le Gourrierec J."/>
            <person name="Sakr S."/>
        </authorList>
    </citation>
    <scope>NUCLEOTIDE SEQUENCE [MRNA]</scope>
    <scope>FUNCTION</scope>
    <scope>TISSUE SPECIFICITY</scope>
    <scope>INDUCTION BY LIGHT AND SUGARS</scope>
</reference>
<reference key="2">
    <citation type="journal article" date="2010" name="Plant Cell Environ.">
        <title>Sugars are under light control during bud burst in Rosa sp.</title>
        <authorList>
            <person name="Girault T."/>
            <person name="Abidi F."/>
            <person name="Sigogne M."/>
            <person name="Pelleschi-Travier S."/>
            <person name="Boumaza R."/>
            <person name="Sakr S."/>
            <person name="Leduc N."/>
        </authorList>
    </citation>
    <scope>INDUCTION BY LIGHT</scope>
</reference>
<reference key="3">
    <citation type="journal article" date="2014" name="Plant Cell Physiol.">
        <title>Interplay of sugar, light and gibberellins in expression of Rosa hybrida vacuolar invertase 1 regulation.</title>
        <authorList>
            <person name="Rabot A."/>
            <person name="Portemer V."/>
            <person name="Peron T."/>
            <person name="Mortreau E."/>
            <person name="Leduc N."/>
            <person name="Hamama L."/>
            <person name="Coutos-Thevenot P."/>
            <person name="Atanassova R."/>
            <person name="Sakr S."/>
            <person name="Le Gourrierec J."/>
        </authorList>
    </citation>
    <scope>TISSUE SPECIFICITY</scope>
    <scope>INDUCTION BY GIBBERELLIN; LIGHT AND SUGARS</scope>
</reference>
<reference key="4">
    <citation type="journal article" date="2016" name="J. Exp. Bot.">
        <title>RhVI1 is a membrane-anchored vacuolar invertase highly expressed in Rosa hybrida L. petals.</title>
        <authorList>
            <person name="Farci D."/>
            <person name="Collu G."/>
            <person name="Kirkpatrick J."/>
            <person name="Esposito F."/>
            <person name="Piano D."/>
        </authorList>
    </citation>
    <scope>FUNCTION</scope>
    <scope>IDENTIFICATION BY MASS SPECTROMETRY</scope>
    <scope>SUBUNIT</scope>
    <scope>GLYCOSYLATION</scope>
    <scope>BIOPHYSICOCHEMICAL PROPERTIES</scope>
    <scope>SUBCELLULAR LOCATION</scope>
</reference>